<proteinExistence type="evidence at protein level"/>
<reference key="1">
    <citation type="journal article" date="2001" name="J. Biol. Chem.">
        <title>A membrane protein enriched in endoplasmic reticulum exit sites interacts with COPII.</title>
        <authorList>
            <person name="Tang B.L."/>
            <person name="Ong Y.S."/>
            <person name="Huang B."/>
            <person name="Wei S."/>
            <person name="Wong E.T."/>
            <person name="Qi R."/>
            <person name="Horstmann H."/>
            <person name="Hong W."/>
        </authorList>
    </citation>
    <scope>NUCLEOTIDE SEQUENCE [MRNA] (ISOFORM 1)</scope>
    <scope>FUNCTION</scope>
    <scope>INTERACTION WITH SEC23 AND SEC24</scope>
    <scope>SUBCELLULAR LOCATION</scope>
</reference>
<reference key="2">
    <citation type="journal article" date="2005" name="Gene">
        <title>Cloning, cellular localization, genomic organization, and tissue-specific expression of the TGFbeta1-inducible SMAP-5 gene.</title>
        <authorList>
            <person name="Stolle K."/>
            <person name="Schnoor M."/>
            <person name="Fuellen G."/>
            <person name="Spitzer M."/>
            <person name="Engel T."/>
            <person name="Spener F."/>
            <person name="Cullen P."/>
            <person name="Lorkowski S."/>
        </authorList>
    </citation>
    <scope>NUCLEOTIDE SEQUENCE [MRNA] (ISOFORMS 1; 2 AND 3)</scope>
    <scope>TISSUE SPECIFICITY</scope>
    <scope>INDUCTION</scope>
    <source>
        <tissue>Coronary artery</tissue>
    </source>
</reference>
<reference key="3">
    <citation type="submission" date="2001-05" db="EMBL/GenBank/DDBJ databases">
        <authorList>
            <person name="Zhang W."/>
            <person name="Li N."/>
            <person name="Zhang M."/>
            <person name="Wan T."/>
            <person name="Cao X."/>
        </authorList>
    </citation>
    <scope>NUCLEOTIDE SEQUENCE [LARGE SCALE MRNA] (ISOFORM 1)</scope>
</reference>
<reference key="4">
    <citation type="journal article" date="2003" name="Genome Res.">
        <title>The secreted protein discovery initiative (SPDI), a large-scale effort to identify novel human secreted and transmembrane proteins: a bioinformatics assessment.</title>
        <authorList>
            <person name="Clark H.F."/>
            <person name="Gurney A.L."/>
            <person name="Abaya E."/>
            <person name="Baker K."/>
            <person name="Baldwin D.T."/>
            <person name="Brush J."/>
            <person name="Chen J."/>
            <person name="Chow B."/>
            <person name="Chui C."/>
            <person name="Crowley C."/>
            <person name="Currell B."/>
            <person name="Deuel B."/>
            <person name="Dowd P."/>
            <person name="Eaton D."/>
            <person name="Foster J.S."/>
            <person name="Grimaldi C."/>
            <person name="Gu Q."/>
            <person name="Hass P.E."/>
            <person name="Heldens S."/>
            <person name="Huang A."/>
            <person name="Kim H.S."/>
            <person name="Klimowski L."/>
            <person name="Jin Y."/>
            <person name="Johnson S."/>
            <person name="Lee J."/>
            <person name="Lewis L."/>
            <person name="Liao D."/>
            <person name="Mark M.R."/>
            <person name="Robbie E."/>
            <person name="Sanchez C."/>
            <person name="Schoenfeld J."/>
            <person name="Seshagiri S."/>
            <person name="Simmons L."/>
            <person name="Singh J."/>
            <person name="Smith V."/>
            <person name="Stinson J."/>
            <person name="Vagts A."/>
            <person name="Vandlen R.L."/>
            <person name="Watanabe C."/>
            <person name="Wieand D."/>
            <person name="Woods K."/>
            <person name="Xie M.-H."/>
            <person name="Yansura D.G."/>
            <person name="Yi S."/>
            <person name="Yu G."/>
            <person name="Yuan J."/>
            <person name="Zhang M."/>
            <person name="Zhang Z."/>
            <person name="Goddard A.D."/>
            <person name="Wood W.I."/>
            <person name="Godowski P.J."/>
            <person name="Gray A.M."/>
        </authorList>
    </citation>
    <scope>NUCLEOTIDE SEQUENCE [LARGE SCALE MRNA] (ISOFORM 1)</scope>
</reference>
<reference key="5">
    <citation type="journal article" date="2004" name="Nat. Genet.">
        <title>Complete sequencing and characterization of 21,243 full-length human cDNAs.</title>
        <authorList>
            <person name="Ota T."/>
            <person name="Suzuki Y."/>
            <person name="Nishikawa T."/>
            <person name="Otsuki T."/>
            <person name="Sugiyama T."/>
            <person name="Irie R."/>
            <person name="Wakamatsu A."/>
            <person name="Hayashi K."/>
            <person name="Sato H."/>
            <person name="Nagai K."/>
            <person name="Kimura K."/>
            <person name="Makita H."/>
            <person name="Sekine M."/>
            <person name="Obayashi M."/>
            <person name="Nishi T."/>
            <person name="Shibahara T."/>
            <person name="Tanaka T."/>
            <person name="Ishii S."/>
            <person name="Yamamoto J."/>
            <person name="Saito K."/>
            <person name="Kawai Y."/>
            <person name="Isono Y."/>
            <person name="Nakamura Y."/>
            <person name="Nagahari K."/>
            <person name="Murakami K."/>
            <person name="Yasuda T."/>
            <person name="Iwayanagi T."/>
            <person name="Wagatsuma M."/>
            <person name="Shiratori A."/>
            <person name="Sudo H."/>
            <person name="Hosoiri T."/>
            <person name="Kaku Y."/>
            <person name="Kodaira H."/>
            <person name="Kondo H."/>
            <person name="Sugawara M."/>
            <person name="Takahashi M."/>
            <person name="Kanda K."/>
            <person name="Yokoi T."/>
            <person name="Furuya T."/>
            <person name="Kikkawa E."/>
            <person name="Omura Y."/>
            <person name="Abe K."/>
            <person name="Kamihara K."/>
            <person name="Katsuta N."/>
            <person name="Sato K."/>
            <person name="Tanikawa M."/>
            <person name="Yamazaki M."/>
            <person name="Ninomiya K."/>
            <person name="Ishibashi T."/>
            <person name="Yamashita H."/>
            <person name="Murakawa K."/>
            <person name="Fujimori K."/>
            <person name="Tanai H."/>
            <person name="Kimata M."/>
            <person name="Watanabe M."/>
            <person name="Hiraoka S."/>
            <person name="Chiba Y."/>
            <person name="Ishida S."/>
            <person name="Ono Y."/>
            <person name="Takiguchi S."/>
            <person name="Watanabe S."/>
            <person name="Yosida M."/>
            <person name="Hotuta T."/>
            <person name="Kusano J."/>
            <person name="Kanehori K."/>
            <person name="Takahashi-Fujii A."/>
            <person name="Hara H."/>
            <person name="Tanase T.-O."/>
            <person name="Nomura Y."/>
            <person name="Togiya S."/>
            <person name="Komai F."/>
            <person name="Hara R."/>
            <person name="Takeuchi K."/>
            <person name="Arita M."/>
            <person name="Imose N."/>
            <person name="Musashino K."/>
            <person name="Yuuki H."/>
            <person name="Oshima A."/>
            <person name="Sasaki N."/>
            <person name="Aotsuka S."/>
            <person name="Yoshikawa Y."/>
            <person name="Matsunawa H."/>
            <person name="Ichihara T."/>
            <person name="Shiohata N."/>
            <person name="Sano S."/>
            <person name="Moriya S."/>
            <person name="Momiyama H."/>
            <person name="Satoh N."/>
            <person name="Takami S."/>
            <person name="Terashima Y."/>
            <person name="Suzuki O."/>
            <person name="Nakagawa S."/>
            <person name="Senoh A."/>
            <person name="Mizoguchi H."/>
            <person name="Goto Y."/>
            <person name="Shimizu F."/>
            <person name="Wakebe H."/>
            <person name="Hishigaki H."/>
            <person name="Watanabe T."/>
            <person name="Sugiyama A."/>
            <person name="Takemoto M."/>
            <person name="Kawakami B."/>
            <person name="Yamazaki M."/>
            <person name="Watanabe K."/>
            <person name="Kumagai A."/>
            <person name="Itakura S."/>
            <person name="Fukuzumi Y."/>
            <person name="Fujimori Y."/>
            <person name="Komiyama M."/>
            <person name="Tashiro H."/>
            <person name="Tanigami A."/>
            <person name="Fujiwara T."/>
            <person name="Ono T."/>
            <person name="Yamada K."/>
            <person name="Fujii Y."/>
            <person name="Ozaki K."/>
            <person name="Hirao M."/>
            <person name="Ohmori Y."/>
            <person name="Kawabata A."/>
            <person name="Hikiji T."/>
            <person name="Kobatake N."/>
            <person name="Inagaki H."/>
            <person name="Ikema Y."/>
            <person name="Okamoto S."/>
            <person name="Okitani R."/>
            <person name="Kawakami T."/>
            <person name="Noguchi S."/>
            <person name="Itoh T."/>
            <person name="Shigeta K."/>
            <person name="Senba T."/>
            <person name="Matsumura K."/>
            <person name="Nakajima Y."/>
            <person name="Mizuno T."/>
            <person name="Morinaga M."/>
            <person name="Sasaki M."/>
            <person name="Togashi T."/>
            <person name="Oyama M."/>
            <person name="Hata H."/>
            <person name="Watanabe M."/>
            <person name="Komatsu T."/>
            <person name="Mizushima-Sugano J."/>
            <person name="Satoh T."/>
            <person name="Shirai Y."/>
            <person name="Takahashi Y."/>
            <person name="Nakagawa K."/>
            <person name="Okumura K."/>
            <person name="Nagase T."/>
            <person name="Nomura N."/>
            <person name="Kikuchi H."/>
            <person name="Masuho Y."/>
            <person name="Yamashita R."/>
            <person name="Nakai K."/>
            <person name="Yada T."/>
            <person name="Nakamura Y."/>
            <person name="Ohara O."/>
            <person name="Isogai T."/>
            <person name="Sugano S."/>
        </authorList>
    </citation>
    <scope>NUCLEOTIDE SEQUENCE [LARGE SCALE MRNA] (ISOFORM 1)</scope>
    <source>
        <tissue>Neuroblastoma</tissue>
    </source>
</reference>
<reference key="6">
    <citation type="journal article" date="2004" name="Proc. Natl. Acad. Sci. U.S.A.">
        <title>Large-scale cDNA transfection screening for genes related to cancer development and progression.</title>
        <authorList>
            <person name="Wan D."/>
            <person name="Gong Y."/>
            <person name="Qin W."/>
            <person name="Zhang P."/>
            <person name="Li J."/>
            <person name="Wei L."/>
            <person name="Zhou X."/>
            <person name="Li H."/>
            <person name="Qiu X."/>
            <person name="Zhong F."/>
            <person name="He L."/>
            <person name="Yu J."/>
            <person name="Yao G."/>
            <person name="Jiang H."/>
            <person name="Qian L."/>
            <person name="Yu Y."/>
            <person name="Shu H."/>
            <person name="Chen X."/>
            <person name="Xu H."/>
            <person name="Guo M."/>
            <person name="Pan Z."/>
            <person name="Chen Y."/>
            <person name="Ge C."/>
            <person name="Yang S."/>
            <person name="Gu J."/>
        </authorList>
    </citation>
    <scope>NUCLEOTIDE SEQUENCE [LARGE SCALE MRNA] (ISOFORM 1)</scope>
</reference>
<reference key="7">
    <citation type="submission" date="2005-04" db="EMBL/GenBank/DDBJ databases">
        <authorList>
            <person name="Totoki Y."/>
            <person name="Toyoda A."/>
            <person name="Takeda T."/>
            <person name="Sakaki Y."/>
            <person name="Tanaka A."/>
            <person name="Yokoyama S."/>
        </authorList>
    </citation>
    <scope>NUCLEOTIDE SEQUENCE [LARGE SCALE MRNA] (ISOFORM 1)</scope>
    <source>
        <tissue>Kidney epithelium</tissue>
    </source>
</reference>
<reference key="8">
    <citation type="journal article" date="2007" name="BMC Genomics">
        <title>The full-ORF clone resource of the German cDNA consortium.</title>
        <authorList>
            <person name="Bechtel S."/>
            <person name="Rosenfelder H."/>
            <person name="Duda A."/>
            <person name="Schmidt C.P."/>
            <person name="Ernst U."/>
            <person name="Wellenreuther R."/>
            <person name="Mehrle A."/>
            <person name="Schuster C."/>
            <person name="Bahr A."/>
            <person name="Bloecker H."/>
            <person name="Heubner D."/>
            <person name="Hoerlein A."/>
            <person name="Michel G."/>
            <person name="Wedler H."/>
            <person name="Koehrer K."/>
            <person name="Ottenwaelder B."/>
            <person name="Poustka A."/>
            <person name="Wiemann S."/>
            <person name="Schupp I."/>
        </authorList>
    </citation>
    <scope>NUCLEOTIDE SEQUENCE [LARGE SCALE MRNA] (ISOFORM 1)</scope>
    <source>
        <tissue>Adipose tissue</tissue>
    </source>
</reference>
<reference key="9">
    <citation type="submission" date="2005-09" db="EMBL/GenBank/DDBJ databases">
        <authorList>
            <person name="Mural R.J."/>
            <person name="Istrail S."/>
            <person name="Sutton G.G."/>
            <person name="Florea L."/>
            <person name="Halpern A.L."/>
            <person name="Mobarry C.M."/>
            <person name="Lippert R."/>
            <person name="Walenz B."/>
            <person name="Shatkay H."/>
            <person name="Dew I."/>
            <person name="Miller J.R."/>
            <person name="Flanigan M.J."/>
            <person name="Edwards N.J."/>
            <person name="Bolanos R."/>
            <person name="Fasulo D."/>
            <person name="Halldorsson B.V."/>
            <person name="Hannenhalli S."/>
            <person name="Turner R."/>
            <person name="Yooseph S."/>
            <person name="Lu F."/>
            <person name="Nusskern D.R."/>
            <person name="Shue B.C."/>
            <person name="Zheng X.H."/>
            <person name="Zhong F."/>
            <person name="Delcher A.L."/>
            <person name="Huson D.H."/>
            <person name="Kravitz S.A."/>
            <person name="Mouchard L."/>
            <person name="Reinert K."/>
            <person name="Remington K.A."/>
            <person name="Clark A.G."/>
            <person name="Waterman M.S."/>
            <person name="Eichler E.E."/>
            <person name="Adams M.D."/>
            <person name="Hunkapiller M.W."/>
            <person name="Myers E.W."/>
            <person name="Venter J.C."/>
        </authorList>
    </citation>
    <scope>NUCLEOTIDE SEQUENCE [LARGE SCALE GENOMIC DNA]</scope>
</reference>
<reference key="10">
    <citation type="journal article" date="2004" name="Genome Res.">
        <title>The status, quality, and expansion of the NIH full-length cDNA project: the Mammalian Gene Collection (MGC).</title>
        <authorList>
            <consortium name="The MGC Project Team"/>
        </authorList>
    </citation>
    <scope>NUCLEOTIDE SEQUENCE [LARGE SCALE MRNA] (ISOFORM 1)</scope>
    <source>
        <tissue>Cervix</tissue>
        <tissue>Eye</tissue>
        <tissue>Uterus</tissue>
    </source>
</reference>
<reference key="11">
    <citation type="submission" date="1998-05" db="EMBL/GenBank/DDBJ databases">
        <title>Molecular cloning and characterization of the human smooth muscle cell associated protein-5 (SMAP-5).</title>
        <authorList>
            <person name="Nishimoto S."/>
            <person name="Toyoda H."/>
            <person name="Tawara J."/>
            <person name="Aoki T."/>
            <person name="Komurasaki T."/>
        </authorList>
    </citation>
    <scope>NUCLEOTIDE SEQUENCE [MRNA] OF 181-257 (ISOFORMS 1/2)</scope>
    <source>
        <tissue>Heart</tissue>
    </source>
</reference>
<reference key="12">
    <citation type="journal article" date="2004" name="Genetics">
        <title>Genetic analysis of yeast Yip1p function reveals a requirement for Golgi-localized rab proteins and rab-Guanine nucleotide dissociation inhibitor.</title>
        <authorList>
            <person name="Chen C.Z."/>
            <person name="Calero M."/>
            <person name="DeRegis C.J."/>
            <person name="Heidtman M."/>
            <person name="Barlowe C."/>
            <person name="Collins R.N."/>
        </authorList>
    </citation>
    <scope>FUNCTION</scope>
    <scope>INTERACTION WITH RAB1A</scope>
</reference>
<reference key="13">
    <citation type="journal article" date="2005" name="Biochem. Biophys. Res. Commun.">
        <title>Human Yip1A specifies the localization of Yif1 to the Golgi apparatus.</title>
        <authorList>
            <person name="Jin C."/>
            <person name="Zhang Y."/>
            <person name="Zhu H."/>
            <person name="Ahmed K."/>
            <person name="Fu C."/>
            <person name="Yao X."/>
        </authorList>
    </citation>
    <scope>INTERACTION WITH YIF1A</scope>
    <scope>SUBCELLULAR LOCATION</scope>
</reference>
<reference key="14">
    <citation type="journal article" date="2005" name="Nat. Biotechnol.">
        <title>Immunoaffinity profiling of tyrosine phosphorylation in cancer cells.</title>
        <authorList>
            <person name="Rush J."/>
            <person name="Moritz A."/>
            <person name="Lee K.A."/>
            <person name="Guo A."/>
            <person name="Goss V.L."/>
            <person name="Spek E.J."/>
            <person name="Zhang H."/>
            <person name="Zha X.-M."/>
            <person name="Polakiewicz R.D."/>
            <person name="Comb M.J."/>
        </authorList>
    </citation>
    <scope>IDENTIFICATION BY MASS SPECTROMETRY [LARGE SCALE ANALYSIS]</scope>
</reference>
<reference key="15">
    <citation type="journal article" date="2013" name="J. Proteome Res.">
        <title>Toward a comprehensive characterization of a human cancer cell phosphoproteome.</title>
        <authorList>
            <person name="Zhou H."/>
            <person name="Di Palma S."/>
            <person name="Preisinger C."/>
            <person name="Peng M."/>
            <person name="Polat A.N."/>
            <person name="Heck A.J."/>
            <person name="Mohammed S."/>
        </authorList>
    </citation>
    <scope>IDENTIFICATION BY MASS SPECTROMETRY [LARGE SCALE ANALYSIS]</scope>
    <source>
        <tissue>Erythroleukemia</tissue>
    </source>
</reference>
<reference key="16">
    <citation type="journal article" date="2014" name="J. Proteomics">
        <title>An enzyme assisted RP-RPLC approach for in-depth analysis of human liver phosphoproteome.</title>
        <authorList>
            <person name="Bian Y."/>
            <person name="Song C."/>
            <person name="Cheng K."/>
            <person name="Dong M."/>
            <person name="Wang F."/>
            <person name="Huang J."/>
            <person name="Sun D."/>
            <person name="Wang L."/>
            <person name="Ye M."/>
            <person name="Zou H."/>
        </authorList>
    </citation>
    <scope>IDENTIFICATION BY MASS SPECTROMETRY [LARGE SCALE ANALYSIS]</scope>
    <source>
        <tissue>Liver</tissue>
    </source>
</reference>
<reference key="17">
    <citation type="journal article" date="2017" name="Histochem. Cell Biol.">
        <title>Functional characterisation of the YIPF protein family in mammalian cells.</title>
        <authorList>
            <person name="Kranjc T."/>
            <person name="Dempsey E."/>
            <person name="Cagney G."/>
            <person name="Nakamura N."/>
            <person name="Shields D.C."/>
            <person name="Simpson J.C."/>
        </authorList>
    </citation>
    <scope>SUBCELLULAR LOCATION</scope>
    <scope>TOPOLOGY</scope>
    <scope>INTERACTION WITH YIPF3 AND YIPF4</scope>
</reference>
<reference key="18">
    <citation type="journal article" date="2020" name="J. Clin. Invest.">
        <title>YIPF5 mutations cause neonatal diabetes and microcephaly through endoplasmic reticulum stress.</title>
        <authorList>
            <person name="De Franco E."/>
            <person name="Lytrivi M."/>
            <person name="Ibrahim H."/>
            <person name="Montaser H."/>
            <person name="Wakeling M.N."/>
            <person name="Fantuzzi F."/>
            <person name="Patel K."/>
            <person name="Demarez C."/>
            <person name="Cai Y."/>
            <person name="Igoillo-Esteve M."/>
            <person name="Cosentino C."/>
            <person name="Lithovius V."/>
            <person name="Vihinen H."/>
            <person name="Jokitalo E."/>
            <person name="Laver T.W."/>
            <person name="Johnson M.B."/>
            <person name="Sawatani T."/>
            <person name="Shakeri H."/>
            <person name="Pachera N."/>
            <person name="Haliloglu B."/>
            <person name="Ozbek M.N."/>
            <person name="Unal E."/>
            <person name="Yildirim R."/>
            <person name="Godbole T."/>
            <person name="Yildiz M."/>
            <person name="Aydin B."/>
            <person name="Bilheu A."/>
            <person name="Suzuki I."/>
            <person name="Flanagan S.E."/>
            <person name="Vanderhaeghen P."/>
            <person name="Senee V."/>
            <person name="Julier C."/>
            <person name="Marchetti P."/>
            <person name="Eizirik D.L."/>
            <person name="Ellard S."/>
            <person name="Saarimaeki-Vire J."/>
            <person name="Otonkoski T."/>
            <person name="Cnop M."/>
            <person name="Hattersley A.T."/>
        </authorList>
    </citation>
    <scope>VARIANTS MEDS2 VAL-97; SER-98; LYS-106 DEL; VAL-181 AND ARG-218</scope>
    <scope>CHARACTERIZATION OF VARIANT MEDS2 SER-98</scope>
    <scope>TISSUE SPECIFICITY</scope>
    <scope>DEVELOPMENTAL STAGE</scope>
    <scope>FUNCTION</scope>
</reference>
<evidence type="ECO:0000250" key="1">
    <source>
        <dbReference type="UniProtKB" id="Q5XID0"/>
    </source>
</evidence>
<evidence type="ECO:0000250" key="2">
    <source>
        <dbReference type="UniProtKB" id="Q9EQQ2"/>
    </source>
</evidence>
<evidence type="ECO:0000255" key="3"/>
<evidence type="ECO:0000269" key="4">
    <source>
    </source>
</evidence>
<evidence type="ECO:0000269" key="5">
    <source>
    </source>
</evidence>
<evidence type="ECO:0000269" key="6">
    <source>
    </source>
</evidence>
<evidence type="ECO:0000269" key="7">
    <source>
    </source>
</evidence>
<evidence type="ECO:0000269" key="8">
    <source>
    </source>
</evidence>
<evidence type="ECO:0000269" key="9">
    <source>
    </source>
</evidence>
<evidence type="ECO:0000303" key="10">
    <source>
    </source>
</evidence>
<evidence type="ECO:0000305" key="11"/>
<evidence type="ECO:0000305" key="12">
    <source>
    </source>
</evidence>
<evidence type="ECO:0000312" key="13">
    <source>
        <dbReference type="HGNC" id="HGNC:24877"/>
    </source>
</evidence>
<gene>
    <name evidence="13" type="primary">YIPF5</name>
    <name type="synonym">FINGER5</name>
    <name type="synonym">YIP1A</name>
    <name type="ORF">PP12723</name>
    <name type="ORF">SB140</name>
    <name type="ORF">UNQ3123/PRO10275</name>
</gene>
<protein>
    <recommendedName>
        <fullName>Protein YIPF5</fullName>
    </recommendedName>
    <alternativeName>
        <fullName>Five-pass transmembrane protein localizing in the Golgi apparatus and the endoplasmic reticulum 5</fullName>
    </alternativeName>
    <alternativeName>
        <fullName>Smooth muscle cell-associated protein 5</fullName>
        <shortName>SMAP-5</shortName>
    </alternativeName>
    <alternativeName>
        <fullName>YIP1 family member 5</fullName>
    </alternativeName>
    <alternativeName>
        <fullName>YPT-interacting protein 1 A</fullName>
    </alternativeName>
</protein>
<sequence length="257" mass="27989">MSGFENLNTDFYQTSYSIDDQSQQSYDYGGSGGPYSKQYAGYDYSQQGRFVPPDMMQPQQPYTGQIYQPTQAYTPASPQPFYGNNFEDEPPLLEELGINFDHIWQKTLTVLHPLKVADGSIMNETDLAGPMVFCLAFGATLLLAGKIQFGYVYGISAIGCLGMFCLLNLMSMTGVSFGCVASVLGYCLLPMILLSSFAVIFSLQGMVGIILTAGIIGWCSFSASKIFISALAMEGQQLLVAYPCALLYGVFALISVF</sequence>
<name>YIPF5_HUMAN</name>
<dbReference type="EMBL" id="AF140225">
    <property type="protein sequence ID" value="AAG48521.1"/>
    <property type="molecule type" value="mRNA"/>
</dbReference>
<dbReference type="EMBL" id="AY640925">
    <property type="protein sequence ID" value="AAV51256.1"/>
    <property type="molecule type" value="mRNA"/>
</dbReference>
<dbReference type="EMBL" id="AY640926">
    <property type="protein sequence ID" value="AAV51257.1"/>
    <property type="molecule type" value="mRNA"/>
</dbReference>
<dbReference type="EMBL" id="AY640927">
    <property type="protein sequence ID" value="AAV51258.1"/>
    <property type="molecule type" value="mRNA"/>
</dbReference>
<dbReference type="EMBL" id="AY640928">
    <property type="protein sequence ID" value="AAV51259.1"/>
    <property type="molecule type" value="mRNA"/>
</dbReference>
<dbReference type="EMBL" id="AY640929">
    <property type="status" value="NOT_ANNOTATED_CDS"/>
    <property type="molecule type" value="mRNA"/>
</dbReference>
<dbReference type="EMBL" id="AY640934">
    <property type="protein sequence ID" value="AAV51260.1"/>
    <property type="molecule type" value="mRNA"/>
</dbReference>
<dbReference type="EMBL" id="AY037152">
    <property type="protein sequence ID" value="AAK67644.1"/>
    <property type="molecule type" value="mRNA"/>
</dbReference>
<dbReference type="EMBL" id="AY358863">
    <property type="protein sequence ID" value="AAQ89222.1"/>
    <property type="molecule type" value="mRNA"/>
</dbReference>
<dbReference type="EMBL" id="AK054576">
    <property type="protein sequence ID" value="BAB70763.1"/>
    <property type="molecule type" value="mRNA"/>
</dbReference>
<dbReference type="EMBL" id="AF318329">
    <property type="protein sequence ID" value="AAL55836.1"/>
    <property type="molecule type" value="mRNA"/>
</dbReference>
<dbReference type="EMBL" id="AK223515">
    <property type="protein sequence ID" value="BAD97235.1"/>
    <property type="molecule type" value="mRNA"/>
</dbReference>
<dbReference type="EMBL" id="CR749463">
    <property type="protein sequence ID" value="CAH18295.1"/>
    <property type="molecule type" value="mRNA"/>
</dbReference>
<dbReference type="EMBL" id="CH471062">
    <property type="protein sequence ID" value="EAW61864.1"/>
    <property type="molecule type" value="Genomic_DNA"/>
</dbReference>
<dbReference type="EMBL" id="CH471062">
    <property type="protein sequence ID" value="EAW61865.1"/>
    <property type="molecule type" value="Genomic_DNA"/>
</dbReference>
<dbReference type="EMBL" id="BC007829">
    <property type="protein sequence ID" value="AAH07829.1"/>
    <property type="molecule type" value="mRNA"/>
</dbReference>
<dbReference type="EMBL" id="BC014253">
    <property type="protein sequence ID" value="AAH14253.1"/>
    <property type="molecule type" value="mRNA"/>
</dbReference>
<dbReference type="EMBL" id="BC024737">
    <property type="protein sequence ID" value="AAH24737.1"/>
    <property type="molecule type" value="mRNA"/>
</dbReference>
<dbReference type="EMBL" id="AB014733">
    <property type="protein sequence ID" value="BAB20270.1"/>
    <property type="molecule type" value="mRNA"/>
</dbReference>
<dbReference type="CCDS" id="CCDS4279.1">
    <molecule id="Q969M3-1"/>
</dbReference>
<dbReference type="CCDS" id="CCDS64277.1">
    <molecule id="Q969M3-2"/>
</dbReference>
<dbReference type="RefSeq" id="NP_001020118.1">
    <molecule id="Q969M3-1"/>
    <property type="nucleotide sequence ID" value="NM_001024947.4"/>
</dbReference>
<dbReference type="RefSeq" id="NP_001258661.1">
    <molecule id="Q969M3-2"/>
    <property type="nucleotide sequence ID" value="NM_001271732.2"/>
</dbReference>
<dbReference type="RefSeq" id="NP_110426.4">
    <molecule id="Q969M3-1"/>
    <property type="nucleotide sequence ID" value="NM_030799.8"/>
</dbReference>
<dbReference type="BioGRID" id="123519">
    <property type="interactions" value="160"/>
</dbReference>
<dbReference type="FunCoup" id="Q969M3">
    <property type="interactions" value="4341"/>
</dbReference>
<dbReference type="IntAct" id="Q969M3">
    <property type="interactions" value="127"/>
</dbReference>
<dbReference type="MINT" id="Q969M3"/>
<dbReference type="STRING" id="9606.ENSP00000274496"/>
<dbReference type="GlyGen" id="Q969M3">
    <property type="glycosylation" value="1 site, 1 O-linked glycan (1 site)"/>
</dbReference>
<dbReference type="iPTMnet" id="Q969M3"/>
<dbReference type="PhosphoSitePlus" id="Q969M3"/>
<dbReference type="SwissPalm" id="Q969M3"/>
<dbReference type="BioMuta" id="YIPF5"/>
<dbReference type="DMDM" id="74760683"/>
<dbReference type="jPOST" id="Q969M3"/>
<dbReference type="MassIVE" id="Q969M3"/>
<dbReference type="PaxDb" id="9606-ENSP00000274496"/>
<dbReference type="PeptideAtlas" id="Q969M3"/>
<dbReference type="ProteomicsDB" id="75792">
    <molecule id="Q969M3-1"/>
</dbReference>
<dbReference type="ProteomicsDB" id="75793">
    <molecule id="Q969M3-2"/>
</dbReference>
<dbReference type="ProteomicsDB" id="75794">
    <molecule id="Q969M3-3"/>
</dbReference>
<dbReference type="Pumba" id="Q969M3"/>
<dbReference type="Antibodypedia" id="45624">
    <property type="antibodies" value="115 antibodies from 20 providers"/>
</dbReference>
<dbReference type="DNASU" id="81555"/>
<dbReference type="Ensembl" id="ENST00000274496.10">
    <molecule id="Q969M3-1"/>
    <property type="protein sequence ID" value="ENSP00000274496.5"/>
    <property type="gene ID" value="ENSG00000145817.17"/>
</dbReference>
<dbReference type="Ensembl" id="ENST00000448443.6">
    <molecule id="Q969M3-1"/>
    <property type="protein sequence ID" value="ENSP00000397704.2"/>
    <property type="gene ID" value="ENSG00000145817.17"/>
</dbReference>
<dbReference type="Ensembl" id="ENST00000513112.5">
    <molecule id="Q969M3-2"/>
    <property type="protein sequence ID" value="ENSP00000425422.1"/>
    <property type="gene ID" value="ENSG00000145817.17"/>
</dbReference>
<dbReference type="GeneID" id="81555"/>
<dbReference type="KEGG" id="hsa:81555"/>
<dbReference type="MANE-Select" id="ENST00000274496.10">
    <property type="protein sequence ID" value="ENSP00000274496.5"/>
    <property type="RefSeq nucleotide sequence ID" value="NM_030799.9"/>
    <property type="RefSeq protein sequence ID" value="NP_110426.4"/>
</dbReference>
<dbReference type="UCSC" id="uc003lnk.6">
    <molecule id="Q969M3-1"/>
    <property type="organism name" value="human"/>
</dbReference>
<dbReference type="AGR" id="HGNC:24877"/>
<dbReference type="CTD" id="81555"/>
<dbReference type="DisGeNET" id="81555"/>
<dbReference type="GeneCards" id="YIPF5"/>
<dbReference type="HGNC" id="HGNC:24877">
    <property type="gene designation" value="YIPF5"/>
</dbReference>
<dbReference type="HPA" id="ENSG00000145817">
    <property type="expression patterns" value="Low tissue specificity"/>
</dbReference>
<dbReference type="MalaCards" id="YIPF5"/>
<dbReference type="MIM" id="611483">
    <property type="type" value="gene"/>
</dbReference>
<dbReference type="MIM" id="619278">
    <property type="type" value="phenotype"/>
</dbReference>
<dbReference type="neXtProt" id="NX_Q969M3"/>
<dbReference type="OpenTargets" id="ENSG00000145817"/>
<dbReference type="Orphanet" id="306558">
    <property type="disease" value="Primary microcephaly-epilepsy-permanent neonatal diabetes syndrome"/>
</dbReference>
<dbReference type="PharmGKB" id="PA142670548"/>
<dbReference type="VEuPathDB" id="HostDB:ENSG00000145817"/>
<dbReference type="eggNOG" id="KOG3103">
    <property type="taxonomic scope" value="Eukaryota"/>
</dbReference>
<dbReference type="GeneTree" id="ENSGT00940000153168"/>
<dbReference type="HOGENOM" id="CLU_074741_2_0_1"/>
<dbReference type="InParanoid" id="Q969M3"/>
<dbReference type="OMA" id="HIRAKSM"/>
<dbReference type="OrthoDB" id="440385at2759"/>
<dbReference type="PAN-GO" id="Q969M3">
    <property type="GO annotations" value="4 GO annotations based on evolutionary models"/>
</dbReference>
<dbReference type="PhylomeDB" id="Q969M3"/>
<dbReference type="TreeFam" id="TF313100"/>
<dbReference type="PathwayCommons" id="Q969M3"/>
<dbReference type="SignaLink" id="Q969M3"/>
<dbReference type="BioGRID-ORCS" id="81555">
    <property type="hits" value="95 hits in 1159 CRISPR screens"/>
</dbReference>
<dbReference type="ChiTaRS" id="YIPF5">
    <property type="organism name" value="human"/>
</dbReference>
<dbReference type="GeneWiki" id="YIPF5"/>
<dbReference type="GenomeRNAi" id="81555"/>
<dbReference type="Pharos" id="Q969M3">
    <property type="development level" value="Tbio"/>
</dbReference>
<dbReference type="PRO" id="PR:Q969M3"/>
<dbReference type="Proteomes" id="UP000005640">
    <property type="component" value="Chromosome 5"/>
</dbReference>
<dbReference type="RNAct" id="Q969M3">
    <property type="molecule type" value="protein"/>
</dbReference>
<dbReference type="Bgee" id="ENSG00000145817">
    <property type="expression patterns" value="Expressed in jejunal mucosa and 201 other cell types or tissues"/>
</dbReference>
<dbReference type="ExpressionAtlas" id="Q969M3">
    <property type="expression patterns" value="baseline and differential"/>
</dbReference>
<dbReference type="GO" id="GO:0030134">
    <property type="term" value="C:COPII-coated ER to Golgi transport vesicle"/>
    <property type="evidence" value="ECO:0007669"/>
    <property type="project" value="UniProtKB-SubCell"/>
</dbReference>
<dbReference type="GO" id="GO:0005783">
    <property type="term" value="C:endoplasmic reticulum"/>
    <property type="evidence" value="ECO:0000314"/>
    <property type="project" value="HPA"/>
</dbReference>
<dbReference type="GO" id="GO:0070971">
    <property type="term" value="C:endoplasmic reticulum exit site"/>
    <property type="evidence" value="ECO:0007669"/>
    <property type="project" value="Ensembl"/>
</dbReference>
<dbReference type="GO" id="GO:0005789">
    <property type="term" value="C:endoplasmic reticulum membrane"/>
    <property type="evidence" value="ECO:0007669"/>
    <property type="project" value="UniProtKB-SubCell"/>
</dbReference>
<dbReference type="GO" id="GO:0005794">
    <property type="term" value="C:Golgi apparatus"/>
    <property type="evidence" value="ECO:0000314"/>
    <property type="project" value="HPA"/>
</dbReference>
<dbReference type="GO" id="GO:0043231">
    <property type="term" value="C:intracellular membrane-bounded organelle"/>
    <property type="evidence" value="ECO:0000314"/>
    <property type="project" value="HPA"/>
</dbReference>
<dbReference type="GO" id="GO:0005654">
    <property type="term" value="C:nucleoplasm"/>
    <property type="evidence" value="ECO:0000314"/>
    <property type="project" value="HPA"/>
</dbReference>
<dbReference type="GO" id="GO:0005802">
    <property type="term" value="C:trans-Golgi network"/>
    <property type="evidence" value="ECO:0000318"/>
    <property type="project" value="GO_Central"/>
</dbReference>
<dbReference type="GO" id="GO:0006888">
    <property type="term" value="P:endoplasmic reticulum to Golgi vesicle-mediated transport"/>
    <property type="evidence" value="ECO:0000318"/>
    <property type="project" value="GO_Central"/>
</dbReference>
<dbReference type="GO" id="GO:0030070">
    <property type="term" value="P:insulin processing"/>
    <property type="evidence" value="ECO:0000315"/>
    <property type="project" value="UniProtKB"/>
</dbReference>
<dbReference type="GO" id="GO:0015031">
    <property type="term" value="P:protein transport"/>
    <property type="evidence" value="ECO:0007669"/>
    <property type="project" value="UniProtKB-KW"/>
</dbReference>
<dbReference type="GO" id="GO:0060628">
    <property type="term" value="P:regulation of ER to Golgi vesicle-mediated transport"/>
    <property type="evidence" value="ECO:0000315"/>
    <property type="project" value="UniProtKB"/>
</dbReference>
<dbReference type="GO" id="GO:0048280">
    <property type="term" value="P:vesicle fusion with Golgi apparatus"/>
    <property type="evidence" value="ECO:0000318"/>
    <property type="project" value="GO_Central"/>
</dbReference>
<dbReference type="InterPro" id="IPR045231">
    <property type="entry name" value="Yip1/4-like"/>
</dbReference>
<dbReference type="InterPro" id="IPR006977">
    <property type="entry name" value="Yip1_dom"/>
</dbReference>
<dbReference type="PANTHER" id="PTHR21236">
    <property type="entry name" value="GOLGI MEMBRANE PROTEIN YIP1"/>
    <property type="match status" value="1"/>
</dbReference>
<dbReference type="PANTHER" id="PTHR21236:SF6">
    <property type="entry name" value="PROTEIN YIPF5"/>
    <property type="match status" value="1"/>
</dbReference>
<dbReference type="Pfam" id="PF04893">
    <property type="entry name" value="Yip1"/>
    <property type="match status" value="1"/>
</dbReference>
<feature type="chain" id="PRO_0000234328" description="Protein YIPF5">
    <location>
        <begin position="1"/>
        <end position="257"/>
    </location>
</feature>
<feature type="topological domain" description="Cytoplasmic" evidence="12">
    <location>
        <begin position="1"/>
        <end position="124"/>
    </location>
</feature>
<feature type="transmembrane region" description="Helical" evidence="3">
    <location>
        <begin position="125"/>
        <end position="145"/>
    </location>
</feature>
<feature type="topological domain" description="Lumenal" evidence="11">
    <location>
        <position position="146"/>
    </location>
</feature>
<feature type="transmembrane region" description="Helical" evidence="3">
    <location>
        <begin position="147"/>
        <end position="167"/>
    </location>
</feature>
<feature type="topological domain" description="Cytoplasmic" evidence="11">
    <location>
        <begin position="168"/>
        <end position="173"/>
    </location>
</feature>
<feature type="transmembrane region" description="Helical" evidence="3">
    <location>
        <begin position="174"/>
        <end position="194"/>
    </location>
</feature>
<feature type="topological domain" description="Lumenal" evidence="11">
    <location>
        <begin position="195"/>
        <end position="196"/>
    </location>
</feature>
<feature type="transmembrane region" description="Helical" evidence="3">
    <location>
        <begin position="197"/>
        <end position="217"/>
    </location>
</feature>
<feature type="topological domain" description="Cytoplasmic" evidence="11">
    <location>
        <begin position="218"/>
        <end position="236"/>
    </location>
</feature>
<feature type="transmembrane region" description="Helical" evidence="3">
    <location>
        <begin position="237"/>
        <end position="257"/>
    </location>
</feature>
<feature type="region of interest" description="Interaction with Sec23">
    <location>
        <begin position="75"/>
        <end position="106"/>
    </location>
</feature>
<feature type="splice variant" id="VSP_018253" description="In isoform 2." evidence="10">
    <location>
        <begin position="1"/>
        <end position="54"/>
    </location>
</feature>
<feature type="splice variant" id="VSP_018254" description="In isoform 3." evidence="10">
    <original>YPCALLYGVFALISVF</original>
    <variation>LQPNITYGSNYFLFCCLPYPQQHF</variation>
    <location>
        <begin position="242"/>
        <end position="257"/>
    </location>
</feature>
<feature type="sequence variant" id="VAR_085533" description="In MEDS2; uncertain significance." evidence="9">
    <original>G</original>
    <variation>V</variation>
    <location>
        <position position="97"/>
    </location>
</feature>
<feature type="sequence variant" id="VAR_085534" description="In MEDS2; no effect on differentiation and function of pancreatic beta cells; increased endoplasmic reticulum stress-induced apoptosis; decreased in C-peptide levels associated with increased proinsulin accumulation." evidence="9">
    <original>I</original>
    <variation>S</variation>
    <location>
        <position position="98"/>
    </location>
</feature>
<feature type="sequence variant" id="VAR_085535" description="In MEDS2; uncertain significance." evidence="9">
    <location>
        <position position="106"/>
    </location>
</feature>
<feature type="sequence variant" id="VAR_085536" description="In MEDS2; uncertain significance." evidence="9">
    <original>A</original>
    <variation>V</variation>
    <location>
        <position position="181"/>
    </location>
</feature>
<feature type="sequence variant" id="VAR_085537" description="In MEDS2; uncertain significance." evidence="9">
    <original>W</original>
    <variation>R</variation>
    <location>
        <position position="218"/>
    </location>
</feature>
<feature type="sequence conflict" description="In Ref. 3; AAK67644." evidence="11" ref="3">
    <original>AFG</original>
    <variation>DLA</variation>
    <location>
        <begin position="136"/>
        <end position="138"/>
    </location>
</feature>
<feature type="sequence conflict" description="In Ref. 1; AAG48521." evidence="11" ref="1">
    <original>I</original>
    <variation>S</variation>
    <location>
        <position position="155"/>
    </location>
</feature>
<feature type="sequence conflict" description="In Ref. 3; AAK67644." evidence="11" ref="3">
    <original>C</original>
    <variation>W</variation>
    <location>
        <position position="187"/>
    </location>
</feature>
<feature type="sequence conflict" description="In Ref. 1; AAG48521." evidence="11" ref="1">
    <original>I</original>
    <variation>Y</variation>
    <location>
        <position position="192"/>
    </location>
</feature>
<feature type="sequence conflict" description="In Ref. 7; BAD97235." evidence="11" ref="7">
    <original>C</original>
    <variation>R</variation>
    <location>
        <position position="244"/>
    </location>
</feature>
<comment type="function">
    <text evidence="4 5 9">Plays a role in transport between endoplasmic reticulum and Golgi. In pancreatic beta cells, required to transport proinsulin from endoplasmic reticulum into the Golgi (PubMed:33164986).</text>
</comment>
<comment type="subunit">
    <text evidence="4 5 7 8">Interacts with the COPII coat components Sec23 (SEC23A and/or SEC23B) and Sec24 (SEC24A and/or SEC24B) (PubMed:11489904). Interacts with YIF1A (PubMed:15990086). May interact with RAB1A (PubMed:15611160). Interacts with YIPF3 and YIPF4 (PubMed:27999994).</text>
</comment>
<comment type="interaction">
    <interactant intactId="EBI-2124787">
        <id>Q969M3</id>
    </interactant>
    <interactant intactId="EBI-371750">
        <id>O75460</id>
        <label>ERN1</label>
    </interactant>
    <organismsDiffer>false</organismsDiffer>
    <experiments>3</experiments>
</comment>
<comment type="interaction">
    <interactant intactId="EBI-2124787">
        <id>Q969M3</id>
    </interactant>
    <interactant intactId="EBI-2799703">
        <id>O95070</id>
        <label>YIF1A</label>
    </interactant>
    <organismsDiffer>false</organismsDiffer>
    <experiments>9</experiments>
</comment>
<comment type="subcellular location">
    <subcellularLocation>
        <location evidence="2">Endoplasmic reticulum membrane</location>
        <topology>Multi-pass membrane protein</topology>
    </subcellularLocation>
    <subcellularLocation>
        <location evidence="8">Golgi apparatus</location>
        <location evidence="8">cis-Golgi network membrane</location>
        <topology>Multi-pass membrane protein</topology>
    </subcellularLocation>
    <subcellularLocation>
        <location evidence="1">Cytoplasmic vesicle</location>
        <location evidence="1">COPII-coated vesicle</location>
    </subcellularLocation>
    <text evidence="1 2">Enriched at the endoplasmic reticulum exit sites (By similarity). Incorporated into COPII-coated vesicles (By similarity).</text>
</comment>
<comment type="alternative products">
    <event type="alternative splicing"/>
    <isoform>
        <id>Q969M3-1</id>
        <name>1</name>
        <sequence type="displayed"/>
    </isoform>
    <isoform>
        <id>Q969M3-2</id>
        <name>2</name>
        <name>D</name>
        <sequence type="described" ref="VSP_018253"/>
    </isoform>
    <isoform>
        <id>Q969M3-3</id>
        <name>3</name>
        <name>I</name>
        <sequence type="described" ref="VSP_018254"/>
    </isoform>
</comment>
<comment type="tissue specificity">
    <text evidence="6 9">Ubiquitously expressed with abundant expression in pancreatic tissue, islets, beta cells, and brain. Highly expressed in coronary smooth muscles.</text>
</comment>
<comment type="developmental stage">
    <text evidence="9">Expressed in developing cortex at all stages examined but most strikingly at 12 gestational weeks. Expression is found in both progenitor (ventricular zone) and neuronal (intermediate zone and cortical plate) compartments. Also selectively expressed within the choroid plexus within the cerebral ventricles.</text>
</comment>
<comment type="induction">
    <text evidence="6">By TGFB1.</text>
</comment>
<comment type="disease" evidence="9">
    <disease id="DI-06083">
        <name>Microcephaly, epilepsy, and diabetes syndrome 2</name>
        <acronym>MEDS2</acronym>
        <description>An autosomal recessive disorder characterized by neonatal or early-onset diabetes, severe microcephaly, and epilepsy.</description>
        <dbReference type="MIM" id="619278"/>
    </disease>
    <text>The disease is caused by variants affecting the gene represented in this entry.</text>
</comment>
<comment type="similarity">
    <text evidence="11">Belongs to the YIP1 family.</text>
</comment>
<accession>Q969M3</accession>
<accession>D3DQF5</accession>
<accession>Q4VSN6</accession>
<accession>Q53EX4</accession>
<accession>Q8NHE5</accession>
<accession>Q9H338</accession>
<accession>Q9H3U4</accession>
<organism>
    <name type="scientific">Homo sapiens</name>
    <name type="common">Human</name>
    <dbReference type="NCBI Taxonomy" id="9606"/>
    <lineage>
        <taxon>Eukaryota</taxon>
        <taxon>Metazoa</taxon>
        <taxon>Chordata</taxon>
        <taxon>Craniata</taxon>
        <taxon>Vertebrata</taxon>
        <taxon>Euteleostomi</taxon>
        <taxon>Mammalia</taxon>
        <taxon>Eutheria</taxon>
        <taxon>Euarchontoglires</taxon>
        <taxon>Primates</taxon>
        <taxon>Haplorrhini</taxon>
        <taxon>Catarrhini</taxon>
        <taxon>Hominidae</taxon>
        <taxon>Homo</taxon>
    </lineage>
</organism>
<keyword id="KW-0025">Alternative splicing</keyword>
<keyword id="KW-0968">Cytoplasmic vesicle</keyword>
<keyword id="KW-0219">Diabetes mellitus</keyword>
<keyword id="KW-0225">Disease variant</keyword>
<keyword id="KW-0256">Endoplasmic reticulum</keyword>
<keyword id="KW-0887">Epilepsy</keyword>
<keyword id="KW-0931">ER-Golgi transport</keyword>
<keyword id="KW-0333">Golgi apparatus</keyword>
<keyword id="KW-0472">Membrane</keyword>
<keyword id="KW-0653">Protein transport</keyword>
<keyword id="KW-1267">Proteomics identification</keyword>
<keyword id="KW-1185">Reference proteome</keyword>
<keyword id="KW-0812">Transmembrane</keyword>
<keyword id="KW-1133">Transmembrane helix</keyword>
<keyword id="KW-0813">Transport</keyword>